<comment type="function">
    <text evidence="1">Involved in the regulation of the microtubule (MT) filament system by destabilizing microtubules. Prevents assembly and promotes disassembly of microtubules. Phosphorylation at Ser-16 may be required for axon formation during neurogenesis. Involved in the control of the learned and innate fear (By similarity).</text>
</comment>
<comment type="subunit">
    <text evidence="5 6">Binds to two alpha/beta-tubulin heterodimers. Interacts with KIST.</text>
</comment>
<comment type="interaction">
    <interactant intactId="EBI-445909">
        <id>P16949</id>
    </interactant>
    <interactant intactId="EBI-519280">
        <id>P46527</id>
        <label>CDKN1B</label>
    </interactant>
    <organismsDiffer>false</organismsDiffer>
    <experiments>3</experiments>
</comment>
<comment type="interaction">
    <interactant intactId="EBI-445909">
        <id>P16949</id>
    </interactant>
    <interactant intactId="EBI-6117072">
        <id>Q86VW0</id>
        <label>SESTD1</label>
    </interactant>
    <organismsDiffer>false</organismsDiffer>
    <experiments>3</experiments>
</comment>
<comment type="subcellular location">
    <subcellularLocation>
        <location>Cytoplasm</location>
        <location>Cytoskeleton</location>
    </subcellularLocation>
</comment>
<comment type="alternative products">
    <event type="alternative splicing"/>
    <isoform>
        <id>P16949-1</id>
        <name>1</name>
        <sequence type="displayed"/>
    </isoform>
    <isoform>
        <id>P16949-2</id>
        <name>2</name>
        <sequence type="described" ref="VSP_041377"/>
    </isoform>
</comment>
<comment type="tissue specificity">
    <text evidence="7 10">Ubiquitous. Expression is strongest in fetal and adult brain, spinal cord, and cerebellum, followed by thymus, bone marrow, testis, and fetal liver. Expression is intermediate in colon, ovary, placenta, uterus, and trachea, and is readily detected at substantially lower levels in all other tissues examined. Lowest expression is found in adult liver. Present in much greater abundance in cells from patients with acute leukemia of different subtypes than in normal peripheral blood lymphocytes, non-leukemic proliferating lymphoid cells, bone marrow cells, or cells from patients with chronic lymphoid or myeloid leukemia.</text>
</comment>
<comment type="induction">
    <text evidence="8">Down-regulated in response to enterovirus 71 (EV71) infection (at protein level).</text>
</comment>
<comment type="PTM">
    <text evidence="1 9 11 12 13">Many different phosphorylated forms are observed depending on specific combinations among the sites which can be phosphorylated. MAPK is responsible for the phosphorylation of stathmin in response to NGF. Phosphorylation at Ser-16 seems to be required for neuron polarization (By similarity). Phosphorylation at Ser-63 reduces tubulin binding 10-fold and suppresses the MT polymerization inhibition activity.</text>
</comment>
<comment type="similarity">
    <text evidence="15">Belongs to the stathmin family.</text>
</comment>
<keyword id="KW-0007">Acetylation</keyword>
<keyword id="KW-0025">Alternative splicing</keyword>
<keyword id="KW-0175">Coiled coil</keyword>
<keyword id="KW-0963">Cytoplasm</keyword>
<keyword id="KW-0206">Cytoskeleton</keyword>
<keyword id="KW-0217">Developmental protein</keyword>
<keyword id="KW-0221">Differentiation</keyword>
<keyword id="KW-0903">Direct protein sequencing</keyword>
<keyword id="KW-0488">Methylation</keyword>
<keyword id="KW-0493">Microtubule</keyword>
<keyword id="KW-0524">Neurogenesis</keyword>
<keyword id="KW-0597">Phosphoprotein</keyword>
<keyword id="KW-1267">Proteomics identification</keyword>
<keyword id="KW-1185">Reference proteome</keyword>
<sequence>MASSDIQVKELEKRASGQAFELILSPRSKESVPEFPLSPPKKKDLSLEEIQKKLEAAEERRKSHEAEVLKQLAEKREHEKEVLQKAIEENNNFSKMAEEKLTHKMEANKENREAQMAAKLERLREKDKHIEEVRKNKESKDPADETEAD</sequence>
<organism>
    <name type="scientific">Homo sapiens</name>
    <name type="common">Human</name>
    <dbReference type="NCBI Taxonomy" id="9606"/>
    <lineage>
        <taxon>Eukaryota</taxon>
        <taxon>Metazoa</taxon>
        <taxon>Chordata</taxon>
        <taxon>Craniata</taxon>
        <taxon>Vertebrata</taxon>
        <taxon>Euteleostomi</taxon>
        <taxon>Mammalia</taxon>
        <taxon>Eutheria</taxon>
        <taxon>Euarchontoglires</taxon>
        <taxon>Primates</taxon>
        <taxon>Haplorrhini</taxon>
        <taxon>Catarrhini</taxon>
        <taxon>Hominidae</taxon>
        <taxon>Homo</taxon>
    </lineage>
</organism>
<protein>
    <recommendedName>
        <fullName>Stathmin</fullName>
    </recommendedName>
    <alternativeName>
        <fullName>Leukemia-associated phosphoprotein p18</fullName>
    </alternativeName>
    <alternativeName>
        <fullName>Metablastin</fullName>
    </alternativeName>
    <alternativeName>
        <fullName>Oncoprotein 18</fullName>
        <shortName>Op18</shortName>
    </alternativeName>
    <alternativeName>
        <fullName>Phosphoprotein p19</fullName>
        <shortName>pp19</shortName>
    </alternativeName>
    <alternativeName>
        <fullName>Prosolin</fullName>
    </alternativeName>
    <alternativeName>
        <fullName>Protein Pr22</fullName>
    </alternativeName>
    <alternativeName>
        <fullName>pp17</fullName>
    </alternativeName>
</protein>
<name>STMN1_HUMAN</name>
<proteinExistence type="evidence at protein level"/>
<accession>P16949</accession>
<accession>A2A2D1</accession>
<accession>B2R4E7</accession>
<accession>B7Z8N4</accession>
<accession>D3DPJ5</accession>
<gene>
    <name type="primary">STMN1</name>
    <name type="synonym">C1orf215</name>
    <name type="synonym">LAP18</name>
    <name type="synonym">OP18</name>
</gene>
<reference key="1">
    <citation type="journal article" date="1989" name="J. Biol. Chem.">
        <title>Molecular cloning of a novel human leukemia-associated gene. Evidence of conservation in animal species.</title>
        <authorList>
            <person name="Zhu X.-X."/>
            <person name="Kozarsky K."/>
            <person name="Strahler J.R."/>
            <person name="Eckerskorn C."/>
            <person name="Lottspeich F."/>
            <person name="Melhem R."/>
            <person name="Lowe J."/>
            <person name="Fox D.A."/>
            <person name="Hanash S.M."/>
            <person name="Atweh G.F."/>
        </authorList>
    </citation>
    <scope>NUCLEOTIDE SEQUENCE [MRNA] (ISOFORM 1)</scope>
    <scope>PROTEIN SEQUENCE OF 45-61</scope>
</reference>
<reference key="2">
    <citation type="journal article" date="1990" name="FEBS Lett.">
        <title>A single amino acid difference distinguishes the human and the rat sequences of stathmin, a ubiquitous intracellular phosphoprotein associated with cell regulations.</title>
        <authorList>
            <person name="Maucuer A."/>
            <person name="Doye V."/>
            <person name="Sobel A."/>
        </authorList>
    </citation>
    <scope>NUCLEOTIDE SEQUENCE [MRNA] (ISOFORM 1)</scope>
</reference>
<reference key="3">
    <citation type="journal article" date="1991" name="J. Biol. Chem.">
        <title>Characterization of the gene for a proliferation-related phosphoprotein (oncoprotein 18) expressed in high amounts in acute leukemia.</title>
        <authorList>
            <person name="Melhem R.F."/>
            <person name="Zhu X."/>
            <person name="Hailat N."/>
            <person name="Strahler J.R."/>
            <person name="Hanash S.M."/>
        </authorList>
    </citation>
    <scope>NUCLEOTIDE SEQUENCE [GENOMIC DNA]</scope>
    <scope>TISSUE SPECIFICITY</scope>
</reference>
<reference key="4">
    <citation type="journal article" date="1996" name="Cell Struct. Funct.">
        <title>Transcriptional and post-transcriptional regulation of pr22 (Op18) with proliferation control.</title>
        <authorList>
            <person name="Hosoya H."/>
            <person name="Ishikawa K."/>
            <person name="Dohi N."/>
            <person name="Marunouchi T."/>
        </authorList>
    </citation>
    <scope>NUCLEOTIDE SEQUENCE [MRNA] (ISOFORM 1)</scope>
</reference>
<reference key="5">
    <citation type="journal article" date="2004" name="Nat. Genet.">
        <title>Complete sequencing and characterization of 21,243 full-length human cDNAs.</title>
        <authorList>
            <person name="Ota T."/>
            <person name="Suzuki Y."/>
            <person name="Nishikawa T."/>
            <person name="Otsuki T."/>
            <person name="Sugiyama T."/>
            <person name="Irie R."/>
            <person name="Wakamatsu A."/>
            <person name="Hayashi K."/>
            <person name="Sato H."/>
            <person name="Nagai K."/>
            <person name="Kimura K."/>
            <person name="Makita H."/>
            <person name="Sekine M."/>
            <person name="Obayashi M."/>
            <person name="Nishi T."/>
            <person name="Shibahara T."/>
            <person name="Tanaka T."/>
            <person name="Ishii S."/>
            <person name="Yamamoto J."/>
            <person name="Saito K."/>
            <person name="Kawai Y."/>
            <person name="Isono Y."/>
            <person name="Nakamura Y."/>
            <person name="Nagahari K."/>
            <person name="Murakami K."/>
            <person name="Yasuda T."/>
            <person name="Iwayanagi T."/>
            <person name="Wagatsuma M."/>
            <person name="Shiratori A."/>
            <person name="Sudo H."/>
            <person name="Hosoiri T."/>
            <person name="Kaku Y."/>
            <person name="Kodaira H."/>
            <person name="Kondo H."/>
            <person name="Sugawara M."/>
            <person name="Takahashi M."/>
            <person name="Kanda K."/>
            <person name="Yokoi T."/>
            <person name="Furuya T."/>
            <person name="Kikkawa E."/>
            <person name="Omura Y."/>
            <person name="Abe K."/>
            <person name="Kamihara K."/>
            <person name="Katsuta N."/>
            <person name="Sato K."/>
            <person name="Tanikawa M."/>
            <person name="Yamazaki M."/>
            <person name="Ninomiya K."/>
            <person name="Ishibashi T."/>
            <person name="Yamashita H."/>
            <person name="Murakawa K."/>
            <person name="Fujimori K."/>
            <person name="Tanai H."/>
            <person name="Kimata M."/>
            <person name="Watanabe M."/>
            <person name="Hiraoka S."/>
            <person name="Chiba Y."/>
            <person name="Ishida S."/>
            <person name="Ono Y."/>
            <person name="Takiguchi S."/>
            <person name="Watanabe S."/>
            <person name="Yosida M."/>
            <person name="Hotuta T."/>
            <person name="Kusano J."/>
            <person name="Kanehori K."/>
            <person name="Takahashi-Fujii A."/>
            <person name="Hara H."/>
            <person name="Tanase T.-O."/>
            <person name="Nomura Y."/>
            <person name="Togiya S."/>
            <person name="Komai F."/>
            <person name="Hara R."/>
            <person name="Takeuchi K."/>
            <person name="Arita M."/>
            <person name="Imose N."/>
            <person name="Musashino K."/>
            <person name="Yuuki H."/>
            <person name="Oshima A."/>
            <person name="Sasaki N."/>
            <person name="Aotsuka S."/>
            <person name="Yoshikawa Y."/>
            <person name="Matsunawa H."/>
            <person name="Ichihara T."/>
            <person name="Shiohata N."/>
            <person name="Sano S."/>
            <person name="Moriya S."/>
            <person name="Momiyama H."/>
            <person name="Satoh N."/>
            <person name="Takami S."/>
            <person name="Terashima Y."/>
            <person name="Suzuki O."/>
            <person name="Nakagawa S."/>
            <person name="Senoh A."/>
            <person name="Mizoguchi H."/>
            <person name="Goto Y."/>
            <person name="Shimizu F."/>
            <person name="Wakebe H."/>
            <person name="Hishigaki H."/>
            <person name="Watanabe T."/>
            <person name="Sugiyama A."/>
            <person name="Takemoto M."/>
            <person name="Kawakami B."/>
            <person name="Yamazaki M."/>
            <person name="Watanabe K."/>
            <person name="Kumagai A."/>
            <person name="Itakura S."/>
            <person name="Fukuzumi Y."/>
            <person name="Fujimori Y."/>
            <person name="Komiyama M."/>
            <person name="Tashiro H."/>
            <person name="Tanigami A."/>
            <person name="Fujiwara T."/>
            <person name="Ono T."/>
            <person name="Yamada K."/>
            <person name="Fujii Y."/>
            <person name="Ozaki K."/>
            <person name="Hirao M."/>
            <person name="Ohmori Y."/>
            <person name="Kawabata A."/>
            <person name="Hikiji T."/>
            <person name="Kobatake N."/>
            <person name="Inagaki H."/>
            <person name="Ikema Y."/>
            <person name="Okamoto S."/>
            <person name="Okitani R."/>
            <person name="Kawakami T."/>
            <person name="Noguchi S."/>
            <person name="Itoh T."/>
            <person name="Shigeta K."/>
            <person name="Senba T."/>
            <person name="Matsumura K."/>
            <person name="Nakajima Y."/>
            <person name="Mizuno T."/>
            <person name="Morinaga M."/>
            <person name="Sasaki M."/>
            <person name="Togashi T."/>
            <person name="Oyama M."/>
            <person name="Hata H."/>
            <person name="Watanabe M."/>
            <person name="Komatsu T."/>
            <person name="Mizushima-Sugano J."/>
            <person name="Satoh T."/>
            <person name="Shirai Y."/>
            <person name="Takahashi Y."/>
            <person name="Nakagawa K."/>
            <person name="Okumura K."/>
            <person name="Nagase T."/>
            <person name="Nomura N."/>
            <person name="Kikuchi H."/>
            <person name="Masuho Y."/>
            <person name="Yamashita R."/>
            <person name="Nakai K."/>
            <person name="Yada T."/>
            <person name="Nakamura Y."/>
            <person name="Ohara O."/>
            <person name="Isogai T."/>
            <person name="Sugano S."/>
        </authorList>
    </citation>
    <scope>NUCLEOTIDE SEQUENCE [LARGE SCALE MRNA] (ISOFORMS 1 AND 2)</scope>
    <source>
        <tissue>Kidney</tissue>
        <tissue>Testis</tissue>
    </source>
</reference>
<reference key="6">
    <citation type="journal article" date="2006" name="Nature">
        <title>The DNA sequence and biological annotation of human chromosome 1.</title>
        <authorList>
            <person name="Gregory S.G."/>
            <person name="Barlow K.F."/>
            <person name="McLay K.E."/>
            <person name="Kaul R."/>
            <person name="Swarbreck D."/>
            <person name="Dunham A."/>
            <person name="Scott C.E."/>
            <person name="Howe K.L."/>
            <person name="Woodfine K."/>
            <person name="Spencer C.C.A."/>
            <person name="Jones M.C."/>
            <person name="Gillson C."/>
            <person name="Searle S."/>
            <person name="Zhou Y."/>
            <person name="Kokocinski F."/>
            <person name="McDonald L."/>
            <person name="Evans R."/>
            <person name="Phillips K."/>
            <person name="Atkinson A."/>
            <person name="Cooper R."/>
            <person name="Jones C."/>
            <person name="Hall R.E."/>
            <person name="Andrews T.D."/>
            <person name="Lloyd C."/>
            <person name="Ainscough R."/>
            <person name="Almeida J.P."/>
            <person name="Ambrose K.D."/>
            <person name="Anderson F."/>
            <person name="Andrew R.W."/>
            <person name="Ashwell R.I.S."/>
            <person name="Aubin K."/>
            <person name="Babbage A.K."/>
            <person name="Bagguley C.L."/>
            <person name="Bailey J."/>
            <person name="Beasley H."/>
            <person name="Bethel G."/>
            <person name="Bird C.P."/>
            <person name="Bray-Allen S."/>
            <person name="Brown J.Y."/>
            <person name="Brown A.J."/>
            <person name="Buckley D."/>
            <person name="Burton J."/>
            <person name="Bye J."/>
            <person name="Carder C."/>
            <person name="Chapman J.C."/>
            <person name="Clark S.Y."/>
            <person name="Clarke G."/>
            <person name="Clee C."/>
            <person name="Cobley V."/>
            <person name="Collier R.E."/>
            <person name="Corby N."/>
            <person name="Coville G.J."/>
            <person name="Davies J."/>
            <person name="Deadman R."/>
            <person name="Dunn M."/>
            <person name="Earthrowl M."/>
            <person name="Ellington A.G."/>
            <person name="Errington H."/>
            <person name="Frankish A."/>
            <person name="Frankland J."/>
            <person name="French L."/>
            <person name="Garner P."/>
            <person name="Garnett J."/>
            <person name="Gay L."/>
            <person name="Ghori M.R.J."/>
            <person name="Gibson R."/>
            <person name="Gilby L.M."/>
            <person name="Gillett W."/>
            <person name="Glithero R.J."/>
            <person name="Grafham D.V."/>
            <person name="Griffiths C."/>
            <person name="Griffiths-Jones S."/>
            <person name="Grocock R."/>
            <person name="Hammond S."/>
            <person name="Harrison E.S.I."/>
            <person name="Hart E."/>
            <person name="Haugen E."/>
            <person name="Heath P.D."/>
            <person name="Holmes S."/>
            <person name="Holt K."/>
            <person name="Howden P.J."/>
            <person name="Hunt A.R."/>
            <person name="Hunt S.E."/>
            <person name="Hunter G."/>
            <person name="Isherwood J."/>
            <person name="James R."/>
            <person name="Johnson C."/>
            <person name="Johnson D."/>
            <person name="Joy A."/>
            <person name="Kay M."/>
            <person name="Kershaw J.K."/>
            <person name="Kibukawa M."/>
            <person name="Kimberley A.M."/>
            <person name="King A."/>
            <person name="Knights A.J."/>
            <person name="Lad H."/>
            <person name="Laird G."/>
            <person name="Lawlor S."/>
            <person name="Leongamornlert D.A."/>
            <person name="Lloyd D.M."/>
            <person name="Loveland J."/>
            <person name="Lovell J."/>
            <person name="Lush M.J."/>
            <person name="Lyne R."/>
            <person name="Martin S."/>
            <person name="Mashreghi-Mohammadi M."/>
            <person name="Matthews L."/>
            <person name="Matthews N.S.W."/>
            <person name="McLaren S."/>
            <person name="Milne S."/>
            <person name="Mistry S."/>
            <person name="Moore M.J.F."/>
            <person name="Nickerson T."/>
            <person name="O'Dell C.N."/>
            <person name="Oliver K."/>
            <person name="Palmeiri A."/>
            <person name="Palmer S.A."/>
            <person name="Parker A."/>
            <person name="Patel D."/>
            <person name="Pearce A.V."/>
            <person name="Peck A.I."/>
            <person name="Pelan S."/>
            <person name="Phelps K."/>
            <person name="Phillimore B.J."/>
            <person name="Plumb R."/>
            <person name="Rajan J."/>
            <person name="Raymond C."/>
            <person name="Rouse G."/>
            <person name="Saenphimmachak C."/>
            <person name="Sehra H.K."/>
            <person name="Sheridan E."/>
            <person name="Shownkeen R."/>
            <person name="Sims S."/>
            <person name="Skuce C.D."/>
            <person name="Smith M."/>
            <person name="Steward C."/>
            <person name="Subramanian S."/>
            <person name="Sycamore N."/>
            <person name="Tracey A."/>
            <person name="Tromans A."/>
            <person name="Van Helmond Z."/>
            <person name="Wall M."/>
            <person name="Wallis J.M."/>
            <person name="White S."/>
            <person name="Whitehead S.L."/>
            <person name="Wilkinson J.E."/>
            <person name="Willey D.L."/>
            <person name="Williams H."/>
            <person name="Wilming L."/>
            <person name="Wray P.W."/>
            <person name="Wu Z."/>
            <person name="Coulson A."/>
            <person name="Vaudin M."/>
            <person name="Sulston J.E."/>
            <person name="Durbin R.M."/>
            <person name="Hubbard T."/>
            <person name="Wooster R."/>
            <person name="Dunham I."/>
            <person name="Carter N.P."/>
            <person name="McVean G."/>
            <person name="Ross M.T."/>
            <person name="Harrow J."/>
            <person name="Olson M.V."/>
            <person name="Beck S."/>
            <person name="Rogers J."/>
            <person name="Bentley D.R."/>
        </authorList>
    </citation>
    <scope>NUCLEOTIDE SEQUENCE [LARGE SCALE GENOMIC DNA]</scope>
</reference>
<reference key="7">
    <citation type="submission" date="2005-09" db="EMBL/GenBank/DDBJ databases">
        <authorList>
            <person name="Mural R.J."/>
            <person name="Istrail S."/>
            <person name="Sutton G.G."/>
            <person name="Florea L."/>
            <person name="Halpern A.L."/>
            <person name="Mobarry C.M."/>
            <person name="Lippert R."/>
            <person name="Walenz B."/>
            <person name="Shatkay H."/>
            <person name="Dew I."/>
            <person name="Miller J.R."/>
            <person name="Flanigan M.J."/>
            <person name="Edwards N.J."/>
            <person name="Bolanos R."/>
            <person name="Fasulo D."/>
            <person name="Halldorsson B.V."/>
            <person name="Hannenhalli S."/>
            <person name="Turner R."/>
            <person name="Yooseph S."/>
            <person name="Lu F."/>
            <person name="Nusskern D.R."/>
            <person name="Shue B.C."/>
            <person name="Zheng X.H."/>
            <person name="Zhong F."/>
            <person name="Delcher A.L."/>
            <person name="Huson D.H."/>
            <person name="Kravitz S.A."/>
            <person name="Mouchard L."/>
            <person name="Reinert K."/>
            <person name="Remington K.A."/>
            <person name="Clark A.G."/>
            <person name="Waterman M.S."/>
            <person name="Eichler E.E."/>
            <person name="Adams M.D."/>
            <person name="Hunkapiller M.W."/>
            <person name="Myers E.W."/>
            <person name="Venter J.C."/>
        </authorList>
    </citation>
    <scope>NUCLEOTIDE SEQUENCE [LARGE SCALE GENOMIC DNA]</scope>
</reference>
<reference key="8">
    <citation type="journal article" date="2004" name="Genome Res.">
        <title>The status, quality, and expansion of the NIH full-length cDNA project: the Mammalian Gene Collection (MGC).</title>
        <authorList>
            <consortium name="The MGC Project Team"/>
        </authorList>
    </citation>
    <scope>NUCLEOTIDE SEQUENCE [LARGE SCALE MRNA] (ISOFORM 1)</scope>
    <source>
        <tissue>Lung</tissue>
    </source>
</reference>
<reference key="9">
    <citation type="submission" date="2008-12" db="UniProtKB">
        <authorList>
            <person name="Lubec G."/>
            <person name="Vishwanath V."/>
            <person name="Chen W.-Q."/>
            <person name="Sun Y."/>
        </authorList>
    </citation>
    <scope>PROTEIN SEQUENCE OF 14-41 AND 44-52</scope>
    <scope>IDENTIFICATION BY MASS SPECTROMETRY</scope>
    <source>
        <tissue>Brain</tissue>
        <tissue>Cajal-Retzius cell</tissue>
        <tissue>Fetal brain cortex</tissue>
    </source>
</reference>
<reference key="10">
    <citation type="journal article" date="1989" name="J. Biol. Chem.">
        <title>Ca2+-dependent and cAMP-dependent control of nicotinic acetylcholine receptor phosphorylation in muscle cells.</title>
        <authorList>
            <person name="Hanash S.M."/>
            <person name="Strahler J.R."/>
            <person name="Kuick R."/>
            <person name="Chu E.H.Y."/>
            <person name="Nichols D."/>
        </authorList>
    </citation>
    <scope>PROTEIN SEQUENCE OF 87-96</scope>
</reference>
<reference key="11">
    <citation type="journal article" date="1992" name="J. Biol. Chem.">
        <title>Analysis of phosphoprotein p19 by liquid chromatography/mass spectrometry. Identification of two proline-directed serine phosphorylation sites and a blocked amino terminus.</title>
        <authorList>
            <person name="Labdon J.E."/>
            <person name="Nieves E."/>
            <person name="Schubart U.K."/>
        </authorList>
    </citation>
    <scope>ACETYLATION AT ALA-2</scope>
    <scope>PHOSPHORYLATION AT SER-25 AND SER-38</scope>
    <scope>IDENTIFICATION BY MASS SPECTROMETRY</scope>
</reference>
<reference key="12">
    <citation type="journal article" date="1993" name="J. Biol. Chem.">
        <title>Serine 25 of oncoprotein 18 is a major cytosolic target for the mitogen-activated protein kinase.</title>
        <authorList>
            <person name="Marklund U."/>
            <person name="Brattsand G."/>
            <person name="Shingler V."/>
            <person name="Gullberg M."/>
        </authorList>
    </citation>
    <scope>PHOSPHORYLATION AT SER-25 AND SER-38</scope>
</reference>
<reference key="13">
    <citation type="journal article" date="1993" name="J. Biol. Chem.">
        <title>Multiple signal transduction pathways induce phosphorylation of serines 16, 25, and 38 of oncoprotein 18 in T lymphocytes.</title>
        <authorList>
            <person name="Marklund U."/>
            <person name="Brattsand G."/>
            <person name="Osterman O."/>
            <person name="Ohlsson P.-I."/>
            <person name="Gullberg M."/>
        </authorList>
    </citation>
    <scope>PHOSPHORYLATION AT SER-16; SER-25 AND SER-38</scope>
</reference>
<reference key="14">
    <citation type="journal article" date="1994" name="Eur. J. Biochem.">
        <title>Cell-cycle-regulated phosphorylation of oncoprotein 18 on Ser16, Ser25 and Ser38.</title>
        <authorList>
            <person name="Brattsand G."/>
            <person name="Marklund U."/>
            <person name="Nylander K."/>
            <person name="Roos G."/>
            <person name="Gullberg M."/>
        </authorList>
    </citation>
    <scope>PHOSPHORYLATION AT SER-16; SER-25 AND SER-38</scope>
</reference>
<reference key="15">
    <citation type="journal article" date="2000" name="EMBO J.">
        <title>Op18/stathmin caps a kinked protofilament-like tubulin tetramer.</title>
        <authorList>
            <person name="Steinmetz M.O."/>
            <person name="Kammerer R.A."/>
            <person name="Jahnke W."/>
            <person name="Goldie K.N."/>
            <person name="Lustig A."/>
            <person name="van Oostrum J."/>
        </authorList>
    </citation>
    <scope>INTERACTION WITH TUBULIN</scope>
</reference>
<reference key="16">
    <citation type="journal article" date="2000" name="J. Biol. Chem.">
        <title>Probing the native structure of stathmin and its interaction domains with tubulin. Combined use of limited proteolysis, size exclusion chromatography, and mass spectrometry.</title>
        <authorList>
            <person name="Redeker V."/>
            <person name="Lachkar S."/>
            <person name="Siavoshian S."/>
            <person name="Charbaut E."/>
            <person name="Rossier J."/>
            <person name="Sobel A."/>
            <person name="Curmi P.A."/>
        </authorList>
    </citation>
    <scope>INTERACTION WITH TUBULIN</scope>
</reference>
<reference key="17">
    <citation type="journal article" date="2001" name="EMBO Rep.">
        <title>Phosphorylation disrupts the central helix in Op18/stathmin and suppresses binding to tubulin.</title>
        <authorList>
            <person name="Steinmetz M.O."/>
            <person name="Jahnke W."/>
            <person name="Towbin H."/>
            <person name="Garcia-Echeverria C."/>
            <person name="Voshol H."/>
            <person name="Mueller D."/>
            <person name="van Oostrum J."/>
        </authorList>
    </citation>
    <scope>EFFECT OF PHOSPHORYLATION AT SER-63 ON TUBULIN BINDING</scope>
</reference>
<reference key="18">
    <citation type="journal article" date="2003" name="Genomics">
        <title>Expression of stathmin family genes in human tissues: non-neural-restricted expression for SCLIP.</title>
        <authorList>
            <person name="Bieche I."/>
            <person name="Maucuer A."/>
            <person name="Laurendeau I."/>
            <person name="Lachkar S."/>
            <person name="Spano A.J."/>
            <person name="Frankfurter A."/>
            <person name="Levy P."/>
            <person name="Manceau V."/>
            <person name="Sobel A."/>
            <person name="Vidaud M."/>
            <person name="Curmi P.A."/>
        </authorList>
    </citation>
    <scope>TISSUE SPECIFICITY</scope>
</reference>
<reference key="19">
    <citation type="journal article" date="2006" name="Cell">
        <title>Global, in vivo, and site-specific phosphorylation dynamics in signaling networks.</title>
        <authorList>
            <person name="Olsen J.V."/>
            <person name="Blagoev B."/>
            <person name="Gnad F."/>
            <person name="Macek B."/>
            <person name="Kumar C."/>
            <person name="Mortensen P."/>
            <person name="Mann M."/>
        </authorList>
    </citation>
    <scope>PHOSPHORYLATION [LARGE SCALE ANALYSIS] AT SER-16; SER-25 AND SER-63</scope>
    <scope>IDENTIFICATION BY MASS SPECTROMETRY [LARGE SCALE ANALYSIS]</scope>
    <source>
        <tissue>Cervix carcinoma</tissue>
    </source>
</reference>
<reference key="20">
    <citation type="journal article" date="2006" name="Cell. Microbiol.">
        <title>Transcriptomic and proteomic analyses of rhabdomyosarcoma cells reveal differential cellular gene expression in response to enterovirus 71 infection.</title>
        <authorList>
            <person name="Leong W.F."/>
            <person name="Chow V.T."/>
        </authorList>
    </citation>
    <scope>INDUCTION</scope>
    <scope>IDENTIFICATION BY MASS SPECTROMETRY</scope>
</reference>
<reference key="21">
    <citation type="journal article" date="2006" name="Nat. Biotechnol.">
        <title>A probability-based approach for high-throughput protein phosphorylation analysis and site localization.</title>
        <authorList>
            <person name="Beausoleil S.A."/>
            <person name="Villen J."/>
            <person name="Gerber S.A."/>
            <person name="Rush J."/>
            <person name="Gygi S.P."/>
        </authorList>
    </citation>
    <scope>PHOSPHORYLATION [LARGE SCALE ANALYSIS] AT SER-16; SER-25 AND SER-38</scope>
    <scope>IDENTIFICATION BY MASS SPECTROMETRY [LARGE SCALE ANALYSIS]</scope>
    <source>
        <tissue>Cervix carcinoma</tissue>
    </source>
</reference>
<reference key="22">
    <citation type="journal article" date="2007" name="J. Proteome Res.">
        <title>Improved titanium dioxide enrichment of phosphopeptides from HeLa cells and high confident phosphopeptide identification by cross-validation of MS/MS and MS/MS/MS spectra.</title>
        <authorList>
            <person name="Yu L.R."/>
            <person name="Zhu Z."/>
            <person name="Chan K.C."/>
            <person name="Issaq H.J."/>
            <person name="Dimitrov D.S."/>
            <person name="Veenstra T.D."/>
        </authorList>
    </citation>
    <scope>PHOSPHORYLATION [LARGE SCALE ANALYSIS] AT SER-16; SER-25; SER-38 AND SER-63</scope>
    <scope>IDENTIFICATION BY MASS SPECTROMETRY [LARGE SCALE ANALYSIS]</scope>
    <source>
        <tissue>Cervix carcinoma</tissue>
    </source>
</reference>
<reference key="23">
    <citation type="journal article" date="2007" name="Mol. Cell. Proteomics">
        <title>Quantitative phosphoproteome profiling of Wnt3a-mediated signaling network: indicating the involvement of ribonucleoside-diphosphate reductase M2 subunit phosphorylation at residue serine 20 in canonical Wnt signal transduction.</title>
        <authorList>
            <person name="Tang L.-Y."/>
            <person name="Deng N."/>
            <person name="Wang L.-S."/>
            <person name="Dai J."/>
            <person name="Wang Z.-L."/>
            <person name="Jiang X.-S."/>
            <person name="Li S.-J."/>
            <person name="Li L."/>
            <person name="Sheng Q.-H."/>
            <person name="Wu D.-Q."/>
            <person name="Li L."/>
            <person name="Zeng R."/>
        </authorList>
    </citation>
    <scope>PHOSPHORYLATION [LARGE SCALE ANALYSIS] AT SER-25 AND SER-38</scope>
    <scope>IDENTIFICATION BY MASS SPECTROMETRY [LARGE SCALE ANALYSIS]</scope>
    <source>
        <tissue>Embryonic kidney</tissue>
    </source>
</reference>
<reference key="24">
    <citation type="journal article" date="2008" name="J. Proteome Res.">
        <title>Combining protein-based IMAC, peptide-based IMAC, and MudPIT for efficient phosphoproteomic analysis.</title>
        <authorList>
            <person name="Cantin G.T."/>
            <person name="Yi W."/>
            <person name="Lu B."/>
            <person name="Park S.K."/>
            <person name="Xu T."/>
            <person name="Lee J.-D."/>
            <person name="Yates J.R. III"/>
        </authorList>
    </citation>
    <scope>PHOSPHORYLATION [LARGE SCALE ANALYSIS] AT SER-16 AND SER-25</scope>
    <scope>IDENTIFICATION BY MASS SPECTROMETRY [LARGE SCALE ANALYSIS]</scope>
    <source>
        <tissue>Cervix carcinoma</tissue>
    </source>
</reference>
<reference key="25">
    <citation type="journal article" date="2008" name="Proc. Natl. Acad. Sci. U.S.A.">
        <title>A quantitative atlas of mitotic phosphorylation.</title>
        <authorList>
            <person name="Dephoure N."/>
            <person name="Zhou C."/>
            <person name="Villen J."/>
            <person name="Beausoleil S.A."/>
            <person name="Bakalarski C.E."/>
            <person name="Elledge S.J."/>
            <person name="Gygi S.P."/>
        </authorList>
    </citation>
    <scope>PHOSPHORYLATION [LARGE SCALE ANALYSIS] AT SER-38</scope>
    <scope>IDENTIFICATION BY MASS SPECTROMETRY [LARGE SCALE ANALYSIS]</scope>
    <source>
        <tissue>Cervix carcinoma</tissue>
    </source>
</reference>
<reference key="26">
    <citation type="journal article" date="2009" name="Anal. Chem.">
        <title>Lys-N and trypsin cover complementary parts of the phosphoproteome in a refined SCX-based approach.</title>
        <authorList>
            <person name="Gauci S."/>
            <person name="Helbig A.O."/>
            <person name="Slijper M."/>
            <person name="Krijgsveld J."/>
            <person name="Heck A.J."/>
            <person name="Mohammed S."/>
        </authorList>
    </citation>
    <scope>ACETYLATION [LARGE SCALE ANALYSIS] AT ALA-2</scope>
    <scope>CLEAVAGE OF INITIATOR METHIONINE [LARGE SCALE ANALYSIS]</scope>
    <scope>IDENTIFICATION BY MASS SPECTROMETRY [LARGE SCALE ANALYSIS]</scope>
</reference>
<reference key="27">
    <citation type="journal article" date="2009" name="Sci. Signal.">
        <title>Quantitative phosphoproteomic analysis of T cell receptor signaling reveals system-wide modulation of protein-protein interactions.</title>
        <authorList>
            <person name="Mayya V."/>
            <person name="Lundgren D.H."/>
            <person name="Hwang S.-I."/>
            <person name="Rezaul K."/>
            <person name="Wu L."/>
            <person name="Eng J.K."/>
            <person name="Rodionov V."/>
            <person name="Han D.K."/>
        </authorList>
    </citation>
    <scope>PHOSPHORYLATION [LARGE SCALE ANALYSIS] AT SER-16; SER-25 AND SER-38</scope>
    <scope>IDENTIFICATION BY MASS SPECTROMETRY [LARGE SCALE ANALYSIS]</scope>
    <source>
        <tissue>Leukemic T-cell</tissue>
    </source>
</reference>
<reference key="28">
    <citation type="journal article" date="2009" name="Science">
        <title>Lysine acetylation targets protein complexes and co-regulates major cellular functions.</title>
        <authorList>
            <person name="Choudhary C."/>
            <person name="Kumar C."/>
            <person name="Gnad F."/>
            <person name="Nielsen M.L."/>
            <person name="Rehman M."/>
            <person name="Walther T.C."/>
            <person name="Olsen J.V."/>
            <person name="Mann M."/>
        </authorList>
    </citation>
    <scope>ACETYLATION [LARGE SCALE ANALYSIS] AT LYS-9; LYS-100 AND LYS-119</scope>
    <scope>IDENTIFICATION BY MASS SPECTROMETRY [LARGE SCALE ANALYSIS]</scope>
</reference>
<reference key="29">
    <citation type="journal article" date="2010" name="Sci. Signal.">
        <title>Quantitative phosphoproteomics reveals widespread full phosphorylation site occupancy during mitosis.</title>
        <authorList>
            <person name="Olsen J.V."/>
            <person name="Vermeulen M."/>
            <person name="Santamaria A."/>
            <person name="Kumar C."/>
            <person name="Miller M.L."/>
            <person name="Jensen L.J."/>
            <person name="Gnad F."/>
            <person name="Cox J."/>
            <person name="Jensen T.S."/>
            <person name="Nigg E.A."/>
            <person name="Brunak S."/>
            <person name="Mann M."/>
        </authorList>
    </citation>
    <scope>PHOSPHORYLATION [LARGE SCALE ANALYSIS] AT SER-16; SER-25; SER-38 AND SER-63</scope>
    <scope>IDENTIFICATION BY MASS SPECTROMETRY [LARGE SCALE ANALYSIS]</scope>
    <source>
        <tissue>Cervix carcinoma</tissue>
    </source>
</reference>
<reference key="30">
    <citation type="journal article" date="2011" name="BMC Syst. Biol.">
        <title>Initial characterization of the human central proteome.</title>
        <authorList>
            <person name="Burkard T.R."/>
            <person name="Planyavsky M."/>
            <person name="Kaupe I."/>
            <person name="Breitwieser F.P."/>
            <person name="Buerckstuemmer T."/>
            <person name="Bennett K.L."/>
            <person name="Superti-Furga G."/>
            <person name="Colinge J."/>
        </authorList>
    </citation>
    <scope>IDENTIFICATION BY MASS SPECTROMETRY [LARGE SCALE ANALYSIS]</scope>
</reference>
<reference key="31">
    <citation type="journal article" date="2011" name="Sci. Signal.">
        <title>System-wide temporal characterization of the proteome and phosphoproteome of human embryonic stem cell differentiation.</title>
        <authorList>
            <person name="Rigbolt K.T."/>
            <person name="Prokhorova T.A."/>
            <person name="Akimov V."/>
            <person name="Henningsen J."/>
            <person name="Johansen P.T."/>
            <person name="Kratchmarova I."/>
            <person name="Kassem M."/>
            <person name="Mann M."/>
            <person name="Olsen J.V."/>
            <person name="Blagoev B."/>
        </authorList>
    </citation>
    <scope>PHOSPHORYLATION [LARGE SCALE ANALYSIS] AT SER-16; SER-25; SER-31; SER-38 AND SER-63</scope>
    <scope>IDENTIFICATION BY MASS SPECTROMETRY [LARGE SCALE ANALYSIS]</scope>
</reference>
<reference key="32">
    <citation type="journal article" date="2012" name="Mol. Cell. Proteomics">
        <title>Comparative large-scale characterisation of plant vs. mammal proteins reveals similar and idiosyncratic N-alpha acetylation features.</title>
        <authorList>
            <person name="Bienvenut W.V."/>
            <person name="Sumpton D."/>
            <person name="Martinez A."/>
            <person name="Lilla S."/>
            <person name="Espagne C."/>
            <person name="Meinnel T."/>
            <person name="Giglione C."/>
        </authorList>
    </citation>
    <scope>ACETYLATION [LARGE SCALE ANALYSIS] AT ALA-2</scope>
    <scope>CLEAVAGE OF INITIATOR METHIONINE [LARGE SCALE ANALYSIS]</scope>
    <scope>IDENTIFICATION BY MASS SPECTROMETRY [LARGE SCALE ANALYSIS]</scope>
</reference>
<reference key="33">
    <citation type="journal article" date="2012" name="Proc. Natl. Acad. Sci. U.S.A.">
        <title>N-terminal acetylome analyses and functional insights of the N-terminal acetyltransferase NatB.</title>
        <authorList>
            <person name="Van Damme P."/>
            <person name="Lasa M."/>
            <person name="Polevoda B."/>
            <person name="Gazquez C."/>
            <person name="Elosegui-Artola A."/>
            <person name="Kim D.S."/>
            <person name="De Juan-Pardo E."/>
            <person name="Demeyer K."/>
            <person name="Hole K."/>
            <person name="Larrea E."/>
            <person name="Timmerman E."/>
            <person name="Prieto J."/>
            <person name="Arnesen T."/>
            <person name="Sherman F."/>
            <person name="Gevaert K."/>
            <person name="Aldabe R."/>
        </authorList>
    </citation>
    <scope>ACETYLATION [LARGE SCALE ANALYSIS] AT ALA-2</scope>
    <scope>CLEAVAGE OF INITIATOR METHIONINE [LARGE SCALE ANALYSIS]</scope>
    <scope>IDENTIFICATION BY MASS SPECTROMETRY [LARGE SCALE ANALYSIS]</scope>
</reference>
<reference key="34">
    <citation type="journal article" date="2013" name="J. Proteome Res.">
        <title>Toward a comprehensive characterization of a human cancer cell phosphoproteome.</title>
        <authorList>
            <person name="Zhou H."/>
            <person name="Di Palma S."/>
            <person name="Preisinger C."/>
            <person name="Peng M."/>
            <person name="Polat A.N."/>
            <person name="Heck A.J."/>
            <person name="Mohammed S."/>
        </authorList>
    </citation>
    <scope>PHOSPHORYLATION [LARGE SCALE ANALYSIS] AT SER-4; SER-16; SER-25; SER-31; SER-38 AND SER-63</scope>
    <scope>IDENTIFICATION BY MASS SPECTROMETRY [LARGE SCALE ANALYSIS]</scope>
    <source>
        <tissue>Cervix carcinoma</tissue>
        <tissue>Erythroleukemia</tissue>
    </source>
</reference>
<reference key="35">
    <citation type="journal article" date="2014" name="J. Proteomics">
        <title>An enzyme assisted RP-RPLC approach for in-depth analysis of human liver phosphoproteome.</title>
        <authorList>
            <person name="Bian Y."/>
            <person name="Song C."/>
            <person name="Cheng K."/>
            <person name="Dong M."/>
            <person name="Wang F."/>
            <person name="Huang J."/>
            <person name="Sun D."/>
            <person name="Wang L."/>
            <person name="Ye M."/>
            <person name="Zou H."/>
        </authorList>
    </citation>
    <scope>PHOSPHORYLATION [LARGE SCALE ANALYSIS] AT SER-38</scope>
    <scope>IDENTIFICATION BY MASS SPECTROMETRY [LARGE SCALE ANALYSIS]</scope>
    <source>
        <tissue>Liver</tissue>
    </source>
</reference>
<reference key="36">
    <citation type="journal article" date="2014" name="Mol. Cell. Proteomics">
        <title>Immunoaffinity enrichment and mass spectrometry analysis of protein methylation.</title>
        <authorList>
            <person name="Guo A."/>
            <person name="Gu H."/>
            <person name="Zhou J."/>
            <person name="Mulhern D."/>
            <person name="Wang Y."/>
            <person name="Lee K.A."/>
            <person name="Yang V."/>
            <person name="Aguiar M."/>
            <person name="Kornhauser J."/>
            <person name="Jia X."/>
            <person name="Ren J."/>
            <person name="Beausoleil S.A."/>
            <person name="Silva J.C."/>
            <person name="Vemulapalli V."/>
            <person name="Bedford M.T."/>
            <person name="Comb M.J."/>
        </authorList>
    </citation>
    <scope>METHYLATION [LARGE SCALE ANALYSIS] AT LYS-29</scope>
    <scope>IDENTIFICATION BY MASS SPECTROMETRY [LARGE SCALE ANALYSIS]</scope>
    <source>
        <tissue>Colon carcinoma</tissue>
    </source>
</reference>
<reference key="37">
    <citation type="journal article" date="2015" name="Proteomics">
        <title>N-terminome analysis of the human mitochondrial proteome.</title>
        <authorList>
            <person name="Vaca Jacome A.S."/>
            <person name="Rabilloud T."/>
            <person name="Schaeffer-Reiss C."/>
            <person name="Rompais M."/>
            <person name="Ayoub D."/>
            <person name="Lane L."/>
            <person name="Bairoch A."/>
            <person name="Van Dorsselaer A."/>
            <person name="Carapito C."/>
        </authorList>
    </citation>
    <scope>IDENTIFICATION BY MASS SPECTROMETRY [LARGE SCALE ANALYSIS]</scope>
</reference>
<feature type="initiator methionine" description="Removed" evidence="9 22 27 28">
    <location>
        <position position="1"/>
    </location>
</feature>
<feature type="chain" id="PRO_0000182389" description="Stathmin">
    <location>
        <begin position="2"/>
        <end position="149"/>
    </location>
</feature>
<feature type="domain" description="SLD" evidence="3">
    <location>
        <begin position="4"/>
        <end position="145"/>
    </location>
</feature>
<feature type="region of interest" description="Disordered" evidence="4">
    <location>
        <begin position="121"/>
        <end position="149"/>
    </location>
</feature>
<feature type="coiled-coil region" evidence="2">
    <location>
        <begin position="41"/>
        <end position="140"/>
    </location>
</feature>
<feature type="compositionally biased region" description="Basic and acidic residues" evidence="4">
    <location>
        <begin position="121"/>
        <end position="143"/>
    </location>
</feature>
<feature type="modified residue" description="N-acetylalanine" evidence="9 22 27 28">
    <location>
        <position position="2"/>
    </location>
</feature>
<feature type="modified residue" description="Phosphoserine" evidence="29">
    <location>
        <position position="4"/>
    </location>
</feature>
<feature type="modified residue" description="N6-acetyllysine" evidence="23">
    <location>
        <position position="9"/>
    </location>
</feature>
<feature type="modified residue" description="Phosphoserine" evidence="11 12 16 17 19 20 24 25 26 29">
    <location>
        <position position="16"/>
    </location>
</feature>
<feature type="modified residue" description="Phosphoserine; by CDK1, MAPK1 and MAPK3" evidence="9 11 12 13 16 17 18 19 20 24 25 26 29">
    <location>
        <position position="25"/>
    </location>
</feature>
<feature type="modified residue" description="N6-methyllysine" evidence="30">
    <location>
        <position position="29"/>
    </location>
</feature>
<feature type="modified residue" description="Phosphoserine" evidence="26 29">
    <location>
        <position position="31"/>
    </location>
</feature>
<feature type="modified residue" description="Phosphoserine; by CDK1, MAPK1 and MAPK3" evidence="9 11 12 13 16 18 19 21 24 25 26 29 31">
    <location>
        <position position="38"/>
    </location>
</feature>
<feature type="modified residue" description="Phosphoserine; by PKA" evidence="17 19 25 26 29">
    <location>
        <position position="63"/>
    </location>
</feature>
<feature type="modified residue" description="N6-acetyllysine" evidence="23">
    <location>
        <position position="100"/>
    </location>
</feature>
<feature type="modified residue" description="N6-acetyllysine" evidence="23">
    <location>
        <position position="119"/>
    </location>
</feature>
<feature type="splice variant" id="VSP_041377" description="In isoform 2." evidence="14">
    <original>DKHIEEVRKNKESKDPADETEAD</original>
    <variation>MYFWTHGPGAHPAQISAEQSCLHSVPALCPALGLQSALITWSDLSHHH</variation>
    <location>
        <begin position="127"/>
        <end position="149"/>
    </location>
</feature>
<dbReference type="EMBL" id="J04991">
    <property type="protein sequence ID" value="AAA59980.1"/>
    <property type="molecule type" value="mRNA"/>
</dbReference>
<dbReference type="EMBL" id="M31303">
    <property type="protein sequence ID" value="AAA59971.1"/>
    <property type="molecule type" value="Genomic_DNA"/>
</dbReference>
<dbReference type="EMBL" id="X53305">
    <property type="protein sequence ID" value="CAA37391.1"/>
    <property type="molecule type" value="mRNA"/>
</dbReference>
<dbReference type="EMBL" id="Z11566">
    <property type="protein sequence ID" value="CAA77660.1"/>
    <property type="molecule type" value="mRNA"/>
</dbReference>
<dbReference type="EMBL" id="X94912">
    <property type="protein sequence ID" value="CAA64398.1"/>
    <property type="molecule type" value="Genomic_DNA"/>
</dbReference>
<dbReference type="EMBL" id="AK303692">
    <property type="protein sequence ID" value="BAH14020.1"/>
    <property type="molecule type" value="mRNA"/>
</dbReference>
<dbReference type="EMBL" id="AK311801">
    <property type="protein sequence ID" value="BAG34744.1"/>
    <property type="molecule type" value="mRNA"/>
</dbReference>
<dbReference type="EMBL" id="AL033528">
    <property type="status" value="NOT_ANNOTATED_CDS"/>
    <property type="molecule type" value="Genomic_DNA"/>
</dbReference>
<dbReference type="EMBL" id="CH471059">
    <property type="protein sequence ID" value="EAX07854.1"/>
    <property type="molecule type" value="Genomic_DNA"/>
</dbReference>
<dbReference type="EMBL" id="CH471059">
    <property type="protein sequence ID" value="EAX07855.1"/>
    <property type="molecule type" value="Genomic_DNA"/>
</dbReference>
<dbReference type="EMBL" id="CH471059">
    <property type="protein sequence ID" value="EAX07856.1"/>
    <property type="molecule type" value="Genomic_DNA"/>
</dbReference>
<dbReference type="EMBL" id="CH471059">
    <property type="protein sequence ID" value="EAX07857.1"/>
    <property type="molecule type" value="Genomic_DNA"/>
</dbReference>
<dbReference type="EMBL" id="CH471059">
    <property type="protein sequence ID" value="EAX07858.1"/>
    <property type="molecule type" value="Genomic_DNA"/>
</dbReference>
<dbReference type="EMBL" id="CH471059">
    <property type="protein sequence ID" value="EAX07859.1"/>
    <property type="molecule type" value="Genomic_DNA"/>
</dbReference>
<dbReference type="EMBL" id="CH471059">
    <property type="protein sequence ID" value="EAX07860.1"/>
    <property type="molecule type" value="Genomic_DNA"/>
</dbReference>
<dbReference type="EMBL" id="BC082228">
    <property type="protein sequence ID" value="AAH82228.1"/>
    <property type="molecule type" value="mRNA"/>
</dbReference>
<dbReference type="CCDS" id="CCDS269.1">
    <molecule id="P16949-1"/>
</dbReference>
<dbReference type="CCDS" id="CCDS44090.1">
    <molecule id="P16949-2"/>
</dbReference>
<dbReference type="PIR" id="A40936">
    <property type="entry name" value="A40936"/>
</dbReference>
<dbReference type="RefSeq" id="NP_001138926.1">
    <molecule id="P16949-2"/>
    <property type="nucleotide sequence ID" value="NM_001145454.3"/>
</dbReference>
<dbReference type="RefSeq" id="NP_005554.1">
    <molecule id="P16949-1"/>
    <property type="nucleotide sequence ID" value="NM_005563.4"/>
</dbReference>
<dbReference type="RefSeq" id="NP_981944.1">
    <molecule id="P16949-1"/>
    <property type="nucleotide sequence ID" value="NM_203399.2"/>
</dbReference>
<dbReference type="RefSeq" id="NP_981946.1">
    <molecule id="P16949-1"/>
    <property type="nucleotide sequence ID" value="NM_203401.2"/>
</dbReference>
<dbReference type="SMR" id="P16949"/>
<dbReference type="BioGRID" id="110119">
    <property type="interactions" value="205"/>
</dbReference>
<dbReference type="FunCoup" id="P16949">
    <property type="interactions" value="1000"/>
</dbReference>
<dbReference type="IntAct" id="P16949">
    <property type="interactions" value="63"/>
</dbReference>
<dbReference type="MINT" id="P16949"/>
<dbReference type="STRING" id="9606.ENSP00000410452"/>
<dbReference type="ChEMBL" id="CHEMBL3879843"/>
<dbReference type="GlyCosmos" id="P16949">
    <property type="glycosylation" value="1 site, 1 glycan"/>
</dbReference>
<dbReference type="GlyGen" id="P16949">
    <property type="glycosylation" value="2 sites, 1 O-linked glycan (2 sites)"/>
</dbReference>
<dbReference type="iPTMnet" id="P16949"/>
<dbReference type="PhosphoSitePlus" id="P16949"/>
<dbReference type="SwissPalm" id="P16949"/>
<dbReference type="BioMuta" id="STMN1"/>
<dbReference type="DMDM" id="134973"/>
<dbReference type="REPRODUCTION-2DPAGE" id="IPI00479997"/>
<dbReference type="CPTAC" id="CPTAC-1009"/>
<dbReference type="CPTAC" id="CPTAC-1010"/>
<dbReference type="CPTAC" id="CPTAC-1368"/>
<dbReference type="jPOST" id="P16949"/>
<dbReference type="MassIVE" id="P16949"/>
<dbReference type="PaxDb" id="9606-ENSP00000410452"/>
<dbReference type="PeptideAtlas" id="P16949"/>
<dbReference type="ProteomicsDB" id="53402">
    <molecule id="P16949-1"/>
</dbReference>
<dbReference type="ProteomicsDB" id="53403">
    <molecule id="P16949-2"/>
</dbReference>
<dbReference type="Pumba" id="P16949"/>
<dbReference type="TopDownProteomics" id="P16949-1">
    <molecule id="P16949-1"/>
</dbReference>
<dbReference type="TopDownProteomics" id="P16949-2">
    <molecule id="P16949-2"/>
</dbReference>
<dbReference type="Antibodypedia" id="4112">
    <property type="antibodies" value="1491 antibodies from 46 providers"/>
</dbReference>
<dbReference type="DNASU" id="3925"/>
<dbReference type="Ensembl" id="ENST00000357865.6">
    <molecule id="P16949-1"/>
    <property type="protein sequence ID" value="ENSP00000350531.2"/>
    <property type="gene ID" value="ENSG00000117632.23"/>
</dbReference>
<dbReference type="Ensembl" id="ENST00000374291.5">
    <molecule id="P16949-1"/>
    <property type="protein sequence ID" value="ENSP00000363409.1"/>
    <property type="gene ID" value="ENSG00000117632.23"/>
</dbReference>
<dbReference type="Ensembl" id="ENST00000399728.5">
    <molecule id="P16949-1"/>
    <property type="protein sequence ID" value="ENSP00000382633.1"/>
    <property type="gene ID" value="ENSG00000117632.23"/>
</dbReference>
<dbReference type="Ensembl" id="ENST00000426559.7">
    <molecule id="P16949-2"/>
    <property type="protein sequence ID" value="ENSP00000410452.2"/>
    <property type="gene ID" value="ENSG00000117632.23"/>
</dbReference>
<dbReference type="Ensembl" id="ENST00000455785.7">
    <molecule id="P16949-1"/>
    <property type="protein sequence ID" value="ENSP00000387858.2"/>
    <property type="gene ID" value="ENSG00000117632.23"/>
</dbReference>
<dbReference type="GeneID" id="3925"/>
<dbReference type="KEGG" id="hsa:3925"/>
<dbReference type="MANE-Select" id="ENST00000455785.7">
    <property type="protein sequence ID" value="ENSP00000387858.2"/>
    <property type="RefSeq nucleotide sequence ID" value="NM_005563.4"/>
    <property type="RefSeq protein sequence ID" value="NP_005554.1"/>
</dbReference>
<dbReference type="UCSC" id="uc001bkz.4">
    <molecule id="P16949-1"/>
    <property type="organism name" value="human"/>
</dbReference>
<dbReference type="AGR" id="HGNC:6510"/>
<dbReference type="CTD" id="3925"/>
<dbReference type="DisGeNET" id="3925"/>
<dbReference type="GeneCards" id="STMN1"/>
<dbReference type="HGNC" id="HGNC:6510">
    <property type="gene designation" value="STMN1"/>
</dbReference>
<dbReference type="HPA" id="ENSG00000117632">
    <property type="expression patterns" value="Tissue enhanced (brain, lymphoid tissue)"/>
</dbReference>
<dbReference type="MIM" id="151442">
    <property type="type" value="gene"/>
</dbReference>
<dbReference type="neXtProt" id="NX_P16949"/>
<dbReference type="OpenTargets" id="ENSG00000117632"/>
<dbReference type="PharmGKB" id="PA35491"/>
<dbReference type="VEuPathDB" id="HostDB:ENSG00000117632"/>
<dbReference type="eggNOG" id="KOG1280">
    <property type="taxonomic scope" value="Eukaryota"/>
</dbReference>
<dbReference type="GeneTree" id="ENSGT01030000234597"/>
<dbReference type="HOGENOM" id="CLU_1562320_0_0_1"/>
<dbReference type="InParanoid" id="P16949"/>
<dbReference type="OMA" id="RKSHEAM"/>
<dbReference type="OrthoDB" id="5986631at2759"/>
<dbReference type="PAN-GO" id="P16949">
    <property type="GO annotations" value="6 GO annotations based on evolutionary models"/>
</dbReference>
<dbReference type="PhylomeDB" id="P16949"/>
<dbReference type="TreeFam" id="TF326935"/>
<dbReference type="PathwayCommons" id="P16949"/>
<dbReference type="Reactome" id="R-HSA-1251985">
    <property type="pathway name" value="Nuclear signaling by ERBB4"/>
</dbReference>
<dbReference type="SignaLink" id="P16949"/>
<dbReference type="SIGNOR" id="P16949"/>
<dbReference type="BioGRID-ORCS" id="3925">
    <property type="hits" value="23 hits in 1168 CRISPR screens"/>
</dbReference>
<dbReference type="ChiTaRS" id="STMN1">
    <property type="organism name" value="human"/>
</dbReference>
<dbReference type="GeneWiki" id="Stathmin"/>
<dbReference type="GenomeRNAi" id="3925"/>
<dbReference type="Pharos" id="P16949">
    <property type="development level" value="Tbio"/>
</dbReference>
<dbReference type="PRO" id="PR:P16949"/>
<dbReference type="Proteomes" id="UP000005640">
    <property type="component" value="Chromosome 1"/>
</dbReference>
<dbReference type="RNAct" id="P16949">
    <property type="molecule type" value="protein"/>
</dbReference>
<dbReference type="Bgee" id="ENSG00000117632">
    <property type="expression patterns" value="Expressed in cortical plate and 179 other cell types or tissues"/>
</dbReference>
<dbReference type="ExpressionAtlas" id="P16949">
    <property type="expression patterns" value="baseline and differential"/>
</dbReference>
<dbReference type="GO" id="GO:0005737">
    <property type="term" value="C:cytoplasm"/>
    <property type="evidence" value="ECO:0000318"/>
    <property type="project" value="GO_Central"/>
</dbReference>
<dbReference type="GO" id="GO:0005829">
    <property type="term" value="C:cytosol"/>
    <property type="evidence" value="ECO:0000314"/>
    <property type="project" value="HPA"/>
</dbReference>
<dbReference type="GO" id="GO:0070062">
    <property type="term" value="C:extracellular exosome"/>
    <property type="evidence" value="ECO:0007005"/>
    <property type="project" value="UniProtKB"/>
</dbReference>
<dbReference type="GO" id="GO:0016020">
    <property type="term" value="C:membrane"/>
    <property type="evidence" value="ECO:0007669"/>
    <property type="project" value="Ensembl"/>
</dbReference>
<dbReference type="GO" id="GO:0005874">
    <property type="term" value="C:microtubule"/>
    <property type="evidence" value="ECO:0007669"/>
    <property type="project" value="UniProtKB-KW"/>
</dbReference>
<dbReference type="GO" id="GO:0043005">
    <property type="term" value="C:neuron projection"/>
    <property type="evidence" value="ECO:0000318"/>
    <property type="project" value="GO_Central"/>
</dbReference>
<dbReference type="GO" id="GO:0015631">
    <property type="term" value="F:tubulin binding"/>
    <property type="evidence" value="ECO:0000314"/>
    <property type="project" value="MGI"/>
</dbReference>
<dbReference type="GO" id="GO:0007409">
    <property type="term" value="P:axonogenesis"/>
    <property type="evidence" value="ECO:0007669"/>
    <property type="project" value="Ensembl"/>
</dbReference>
<dbReference type="GO" id="GO:0061436">
    <property type="term" value="P:establishment of skin barrier"/>
    <property type="evidence" value="ECO:0000315"/>
    <property type="project" value="CAFA"/>
</dbReference>
<dbReference type="GO" id="GO:0048012">
    <property type="term" value="P:hepatocyte growth factor receptor signaling pathway"/>
    <property type="evidence" value="ECO:0000315"/>
    <property type="project" value="CAFA"/>
</dbReference>
<dbReference type="GO" id="GO:0035556">
    <property type="term" value="P:intracellular signal transduction"/>
    <property type="evidence" value="ECO:0000304"/>
    <property type="project" value="ProtInc"/>
</dbReference>
<dbReference type="GO" id="GO:0007019">
    <property type="term" value="P:microtubule depolymerization"/>
    <property type="evidence" value="ECO:0000314"/>
    <property type="project" value="MGI"/>
</dbReference>
<dbReference type="GO" id="GO:0000281">
    <property type="term" value="P:mitotic cytokinesis"/>
    <property type="evidence" value="ECO:0000315"/>
    <property type="project" value="GO_Central"/>
</dbReference>
<dbReference type="GO" id="GO:0007052">
    <property type="term" value="P:mitotic spindle organization"/>
    <property type="evidence" value="ECO:0000314"/>
    <property type="project" value="MGI"/>
</dbReference>
<dbReference type="GO" id="GO:1905098">
    <property type="term" value="P:negative regulation of guanyl-nucleotide exchange factor activity"/>
    <property type="evidence" value="ECO:0000315"/>
    <property type="project" value="CAFA"/>
</dbReference>
<dbReference type="GO" id="GO:0031115">
    <property type="term" value="P:negative regulation of microtubule polymerization"/>
    <property type="evidence" value="ECO:0000315"/>
    <property type="project" value="CAFA"/>
</dbReference>
<dbReference type="GO" id="GO:0035024">
    <property type="term" value="P:negative regulation of Rho protein signal transduction"/>
    <property type="evidence" value="ECO:0000315"/>
    <property type="project" value="CAFA"/>
</dbReference>
<dbReference type="GO" id="GO:0051497">
    <property type="term" value="P:negative regulation of stress fiber assembly"/>
    <property type="evidence" value="ECO:0000315"/>
    <property type="project" value="CAFA"/>
</dbReference>
<dbReference type="GO" id="GO:0070495">
    <property type="term" value="P:negative regulation of thrombin-activated receptor signaling pathway"/>
    <property type="evidence" value="ECO:0000315"/>
    <property type="project" value="CAFA"/>
</dbReference>
<dbReference type="GO" id="GO:0031175">
    <property type="term" value="P:neuron projection development"/>
    <property type="evidence" value="ECO:0000318"/>
    <property type="project" value="GO_Central"/>
</dbReference>
<dbReference type="GO" id="GO:0030334">
    <property type="term" value="P:regulation of cell migration"/>
    <property type="evidence" value="ECO:0007669"/>
    <property type="project" value="Ensembl"/>
</dbReference>
<dbReference type="GO" id="GO:0031110">
    <property type="term" value="P:regulation of microtubule polymerization or depolymerization"/>
    <property type="evidence" value="ECO:0000315"/>
    <property type="project" value="CAFA"/>
</dbReference>
<dbReference type="GO" id="GO:0009615">
    <property type="term" value="P:response to virus"/>
    <property type="evidence" value="ECO:0000270"/>
    <property type="project" value="UniProtKB"/>
</dbReference>
<dbReference type="GO" id="GO:0007165">
    <property type="term" value="P:signal transduction"/>
    <property type="evidence" value="ECO:0000303"/>
    <property type="project" value="ProtInc"/>
</dbReference>
<dbReference type="Gene3D" id="6.10.280.30">
    <property type="match status" value="1"/>
</dbReference>
<dbReference type="InterPro" id="IPR030514">
    <property type="entry name" value="Stathmin_CS"/>
</dbReference>
<dbReference type="InterPro" id="IPR000956">
    <property type="entry name" value="Stathmin_fam"/>
</dbReference>
<dbReference type="InterPro" id="IPR036002">
    <property type="entry name" value="Stathmin_sf"/>
</dbReference>
<dbReference type="PANTHER" id="PTHR10104">
    <property type="entry name" value="STATHMIN"/>
    <property type="match status" value="1"/>
</dbReference>
<dbReference type="PANTHER" id="PTHR10104:SF5">
    <property type="entry name" value="STATHMIN"/>
    <property type="match status" value="1"/>
</dbReference>
<dbReference type="Pfam" id="PF00836">
    <property type="entry name" value="Stathmin"/>
    <property type="match status" value="1"/>
</dbReference>
<dbReference type="PIRSF" id="PIRSF002285">
    <property type="entry name" value="Stathmin"/>
    <property type="match status" value="1"/>
</dbReference>
<dbReference type="PRINTS" id="PR00345">
    <property type="entry name" value="STATHMIN"/>
</dbReference>
<dbReference type="SUPFAM" id="SSF101494">
    <property type="entry name" value="Stathmin"/>
    <property type="match status" value="1"/>
</dbReference>
<dbReference type="PROSITE" id="PS00563">
    <property type="entry name" value="STATHMIN_1"/>
    <property type="match status" value="1"/>
</dbReference>
<dbReference type="PROSITE" id="PS01041">
    <property type="entry name" value="STATHMIN_2"/>
    <property type="match status" value="1"/>
</dbReference>
<dbReference type="PROSITE" id="PS51663">
    <property type="entry name" value="STATHMIN_3"/>
    <property type="match status" value="1"/>
</dbReference>
<evidence type="ECO:0000250" key="1"/>
<evidence type="ECO:0000255" key="2"/>
<evidence type="ECO:0000255" key="3">
    <source>
        <dbReference type="PROSITE-ProRule" id="PRU00998"/>
    </source>
</evidence>
<evidence type="ECO:0000256" key="4">
    <source>
        <dbReference type="SAM" id="MobiDB-lite"/>
    </source>
</evidence>
<evidence type="ECO:0000269" key="5">
    <source>
    </source>
</evidence>
<evidence type="ECO:0000269" key="6">
    <source>
    </source>
</evidence>
<evidence type="ECO:0000269" key="7">
    <source>
    </source>
</evidence>
<evidence type="ECO:0000269" key="8">
    <source>
    </source>
</evidence>
<evidence type="ECO:0000269" key="9">
    <source>
    </source>
</evidence>
<evidence type="ECO:0000269" key="10">
    <source>
    </source>
</evidence>
<evidence type="ECO:0000269" key="11">
    <source>
    </source>
</evidence>
<evidence type="ECO:0000269" key="12">
    <source>
    </source>
</evidence>
<evidence type="ECO:0000269" key="13">
    <source>
    </source>
</evidence>
<evidence type="ECO:0000303" key="14">
    <source>
    </source>
</evidence>
<evidence type="ECO:0000305" key="15"/>
<evidence type="ECO:0007744" key="16">
    <source>
    </source>
</evidence>
<evidence type="ECO:0007744" key="17">
    <source>
    </source>
</evidence>
<evidence type="ECO:0007744" key="18">
    <source>
    </source>
</evidence>
<evidence type="ECO:0007744" key="19">
    <source>
    </source>
</evidence>
<evidence type="ECO:0007744" key="20">
    <source>
    </source>
</evidence>
<evidence type="ECO:0007744" key="21">
    <source>
    </source>
</evidence>
<evidence type="ECO:0007744" key="22">
    <source>
    </source>
</evidence>
<evidence type="ECO:0007744" key="23">
    <source>
    </source>
</evidence>
<evidence type="ECO:0007744" key="24">
    <source>
    </source>
</evidence>
<evidence type="ECO:0007744" key="25">
    <source>
    </source>
</evidence>
<evidence type="ECO:0007744" key="26">
    <source>
    </source>
</evidence>
<evidence type="ECO:0007744" key="27">
    <source>
    </source>
</evidence>
<evidence type="ECO:0007744" key="28">
    <source>
    </source>
</evidence>
<evidence type="ECO:0007744" key="29">
    <source>
    </source>
</evidence>
<evidence type="ECO:0007744" key="30">
    <source>
    </source>
</evidence>
<evidence type="ECO:0007744" key="31">
    <source>
    </source>
</evidence>